<keyword id="KW-0030">Aminoacyl-tRNA synthetase</keyword>
<keyword id="KW-0067">ATP-binding</keyword>
<keyword id="KW-0963">Cytoplasm</keyword>
<keyword id="KW-0436">Ligase</keyword>
<keyword id="KW-0547">Nucleotide-binding</keyword>
<keyword id="KW-0648">Protein biosynthesis</keyword>
<keyword id="KW-1185">Reference proteome</keyword>
<feature type="chain" id="PRO_0000388393" description="Probable glutamate--tRNA ligase, cytoplasmic">
    <location>
        <begin position="1"/>
        <end position="614"/>
    </location>
</feature>
<feature type="short sequence motif" description="'HIGH' region" evidence="1">
    <location>
        <begin position="135"/>
        <end position="144"/>
    </location>
</feature>
<feature type="short sequence motif" description="'KMSKS' region" evidence="1">
    <location>
        <begin position="359"/>
        <end position="363"/>
    </location>
</feature>
<feature type="binding site" evidence="1">
    <location>
        <begin position="130"/>
        <end position="132"/>
    </location>
    <ligand>
        <name>L-glutamate</name>
        <dbReference type="ChEBI" id="CHEBI:29985"/>
    </ligand>
</feature>
<feature type="binding site" evidence="1">
    <location>
        <position position="140"/>
    </location>
    <ligand>
        <name>ATP</name>
        <dbReference type="ChEBI" id="CHEBI:30616"/>
    </ligand>
</feature>
<feature type="binding site" evidence="1">
    <location>
        <position position="166"/>
    </location>
    <ligand>
        <name>L-glutamate</name>
        <dbReference type="ChEBI" id="CHEBI:29985"/>
    </ligand>
</feature>
<feature type="binding site" evidence="1">
    <location>
        <begin position="303"/>
        <end position="307"/>
    </location>
    <ligand>
        <name>L-glutamate</name>
        <dbReference type="ChEBI" id="CHEBI:29985"/>
    </ligand>
</feature>
<feature type="binding site" evidence="1">
    <location>
        <position position="321"/>
    </location>
    <ligand>
        <name>L-glutamate</name>
        <dbReference type="ChEBI" id="CHEBI:29985"/>
    </ligand>
</feature>
<feature type="binding site" evidence="1">
    <location>
        <position position="324"/>
    </location>
    <ligand>
        <name>ATP</name>
        <dbReference type="ChEBI" id="CHEBI:30616"/>
    </ligand>
</feature>
<feature type="binding site" evidence="1">
    <location>
        <begin position="359"/>
        <end position="363"/>
    </location>
    <ligand>
        <name>ATP</name>
        <dbReference type="ChEBI" id="CHEBI:30616"/>
    </ligand>
</feature>
<proteinExistence type="inferred from homology"/>
<gene>
    <name type="ORF">NCER_102160</name>
</gene>
<organism>
    <name type="scientific">Vairimorpha ceranae (strain BRL01)</name>
    <name type="common">Microsporidian parasite</name>
    <name type="synonym">Nosema ceranae</name>
    <dbReference type="NCBI Taxonomy" id="578460"/>
    <lineage>
        <taxon>Eukaryota</taxon>
        <taxon>Fungi</taxon>
        <taxon>Fungi incertae sedis</taxon>
        <taxon>Microsporidia</taxon>
        <taxon>Nosematidae</taxon>
        <taxon>Vairimorpha</taxon>
    </lineage>
</organism>
<reference key="1">
    <citation type="journal article" date="2009" name="PLoS Pathog.">
        <title>Genomic analyses of the microsporidian Nosema ceranae, an emergent pathogen of honey bees.</title>
        <authorList>
            <person name="Cornman R.S."/>
            <person name="Chen Y.P."/>
            <person name="Schatz M.C."/>
            <person name="Street C."/>
            <person name="Zhao Y."/>
            <person name="Desany B."/>
            <person name="Egholm M."/>
            <person name="Hutchison S."/>
            <person name="Pettis J.S."/>
            <person name="Lipkin W.I."/>
            <person name="Evans J.D."/>
        </authorList>
    </citation>
    <scope>NUCLEOTIDE SEQUENCE [LARGE SCALE GENOMIC DNA]</scope>
    <source>
        <strain>BRL01</strain>
    </source>
</reference>
<name>SYEC_VAIC1</name>
<dbReference type="EC" id="6.1.1.17"/>
<dbReference type="EMBL" id="ACOL01000581">
    <property type="protein sequence ID" value="EEQ81415.1"/>
    <property type="molecule type" value="Genomic_DNA"/>
</dbReference>
<dbReference type="RefSeq" id="XP_002995086.1">
    <property type="nucleotide sequence ID" value="XM_002995040.1"/>
</dbReference>
<dbReference type="SMR" id="C4VBI7"/>
<dbReference type="FunCoup" id="C4VBI7">
    <property type="interactions" value="80"/>
</dbReference>
<dbReference type="STRING" id="578460.C4VBI7"/>
<dbReference type="KEGG" id="nce:NCER_102160"/>
<dbReference type="VEuPathDB" id="MicrosporidiaDB:NCER_102160"/>
<dbReference type="HOGENOM" id="CLU_001882_1_2_1"/>
<dbReference type="InParanoid" id="C4VBI7"/>
<dbReference type="OMA" id="ANRYFFV"/>
<dbReference type="OrthoDB" id="8498at6029"/>
<dbReference type="Proteomes" id="UP000009082">
    <property type="component" value="Unassembled WGS sequence"/>
</dbReference>
<dbReference type="GO" id="GO:0005829">
    <property type="term" value="C:cytosol"/>
    <property type="evidence" value="ECO:0007669"/>
    <property type="project" value="TreeGrafter"/>
</dbReference>
<dbReference type="GO" id="GO:0017102">
    <property type="term" value="C:methionyl glutamyl tRNA synthetase complex"/>
    <property type="evidence" value="ECO:0007669"/>
    <property type="project" value="TreeGrafter"/>
</dbReference>
<dbReference type="GO" id="GO:0005524">
    <property type="term" value="F:ATP binding"/>
    <property type="evidence" value="ECO:0007669"/>
    <property type="project" value="UniProtKB-KW"/>
</dbReference>
<dbReference type="GO" id="GO:0004818">
    <property type="term" value="F:glutamate-tRNA ligase activity"/>
    <property type="evidence" value="ECO:0007669"/>
    <property type="project" value="UniProtKB-EC"/>
</dbReference>
<dbReference type="GO" id="GO:0006424">
    <property type="term" value="P:glutamyl-tRNA aminoacylation"/>
    <property type="evidence" value="ECO:0007669"/>
    <property type="project" value="InterPro"/>
</dbReference>
<dbReference type="FunFam" id="1.10.1160.10:FF:000001">
    <property type="entry name" value="Glutamine--tRNA ligase"/>
    <property type="match status" value="1"/>
</dbReference>
<dbReference type="FunFam" id="3.90.800.10:FF:000001">
    <property type="entry name" value="Glutamine--tRNA ligase"/>
    <property type="match status" value="1"/>
</dbReference>
<dbReference type="Gene3D" id="1.10.1160.10">
    <property type="entry name" value="Glutamyl-trna Synthetase, Domain 2"/>
    <property type="match status" value="1"/>
</dbReference>
<dbReference type="Gene3D" id="3.90.800.10">
    <property type="entry name" value="Glutamyl-tRNA Synthetase, Domain 3"/>
    <property type="match status" value="1"/>
</dbReference>
<dbReference type="Gene3D" id="3.40.50.620">
    <property type="entry name" value="HUPs"/>
    <property type="match status" value="1"/>
</dbReference>
<dbReference type="HAMAP" id="MF_02076">
    <property type="entry name" value="Glu_tRNA_synth_type2"/>
    <property type="match status" value="1"/>
</dbReference>
<dbReference type="InterPro" id="IPR001412">
    <property type="entry name" value="aa-tRNA-synth_I_CS"/>
</dbReference>
<dbReference type="InterPro" id="IPR050132">
    <property type="entry name" value="Gln/Glu-tRNA_Ligase"/>
</dbReference>
<dbReference type="InterPro" id="IPR004526">
    <property type="entry name" value="Glu-tRNA-synth_arc/euk"/>
</dbReference>
<dbReference type="InterPro" id="IPR000924">
    <property type="entry name" value="Glu/Gln-tRNA-synth"/>
</dbReference>
<dbReference type="InterPro" id="IPR020058">
    <property type="entry name" value="Glu/Gln-tRNA-synth_Ib_cat-dom"/>
</dbReference>
<dbReference type="InterPro" id="IPR020059">
    <property type="entry name" value="Glu/Gln-tRNA-synth_Ib_codon-bd"/>
</dbReference>
<dbReference type="InterPro" id="IPR020061">
    <property type="entry name" value="Glu_tRNA_lig_a-bdl"/>
</dbReference>
<dbReference type="InterPro" id="IPR011035">
    <property type="entry name" value="Ribosomal_bL25/Gln-tRNA_synth"/>
</dbReference>
<dbReference type="InterPro" id="IPR014729">
    <property type="entry name" value="Rossmann-like_a/b/a_fold"/>
</dbReference>
<dbReference type="InterPro" id="IPR049437">
    <property type="entry name" value="tRNA-synt_1c_C2"/>
</dbReference>
<dbReference type="PANTHER" id="PTHR43097:SF5">
    <property type="entry name" value="GLUTAMATE--TRNA LIGASE"/>
    <property type="match status" value="1"/>
</dbReference>
<dbReference type="PANTHER" id="PTHR43097">
    <property type="entry name" value="GLUTAMINE-TRNA LIGASE"/>
    <property type="match status" value="1"/>
</dbReference>
<dbReference type="Pfam" id="PF00749">
    <property type="entry name" value="tRNA-synt_1c"/>
    <property type="match status" value="1"/>
</dbReference>
<dbReference type="Pfam" id="PF03950">
    <property type="entry name" value="tRNA-synt_1c_C"/>
    <property type="match status" value="1"/>
</dbReference>
<dbReference type="Pfam" id="PF20974">
    <property type="entry name" value="tRNA-synt_1c_C2"/>
    <property type="match status" value="1"/>
</dbReference>
<dbReference type="PRINTS" id="PR00987">
    <property type="entry name" value="TRNASYNTHGLU"/>
</dbReference>
<dbReference type="SUPFAM" id="SSF52374">
    <property type="entry name" value="Nucleotidylyl transferase"/>
    <property type="match status" value="1"/>
</dbReference>
<dbReference type="SUPFAM" id="SSF50715">
    <property type="entry name" value="Ribosomal protein L25-like"/>
    <property type="match status" value="1"/>
</dbReference>
<dbReference type="PROSITE" id="PS00178">
    <property type="entry name" value="AA_TRNA_LIGASE_I"/>
    <property type="match status" value="1"/>
</dbReference>
<protein>
    <recommendedName>
        <fullName>Probable glutamate--tRNA ligase, cytoplasmic</fullName>
        <ecNumber>6.1.1.17</ecNumber>
    </recommendedName>
    <alternativeName>
        <fullName>Glutamyl-tRNA synthetase</fullName>
        <shortName>GluRS</shortName>
    </alternativeName>
</protein>
<sequence length="614" mass="70755">MAVENAINFREICSLLDISESYKCTINAFLDNVEKCTDKHYNDALNLLDTFFSNEVKSNSLVNDLIFCIINSNFDFLKVFKSNKLRLENLQIVYESAFNENKPFLKEFSAKDKINKEVKKNLYSTPAVTRFAPEPSGCLHIGHLKALLVNYNLAEKSNGTLLLRFDDTNPVKNYEKYEKEILRDLDTLGITGLKISHSSDYFELLVDEAVSLINKNLAYVDNTDQETMRIERFEGIESKMRNINNSESLKIFKELLQGRAPGYCLRAKIDMSNPNKSMRDPVIYRASDKMHGRCKLYKAFPTYDFVCPIVDSIEGVTVVCRANEYKDRNEQYKWFLENLELENKPEFNDFSKLNLEDTVLSKRKIDKLISDSLVTGWDDPRLATIQGIKRLGMHMTALKDYINLQGASNKTNVISWDKIWAMNKKVIDPLSPRFMAVEKINCVRVFITNFEGLKYTKNIPLNKKNTSLGSKDVLFSDTLLFSQEDGFVLKENEEFTLMNWGNAIVEKKVVENSIVTELYIKLHLEGDYKSTTNKISWVSESGAVTATGIEYGKLLVNEEFNINSKIDKQYYVESSITNLSTDMKHVQFERIGFFYCDSPCVFHLVPFTKQKRTY</sequence>
<comment type="catalytic activity">
    <reaction>
        <text>tRNA(Glu) + L-glutamate + ATP = L-glutamyl-tRNA(Glu) + AMP + diphosphate</text>
        <dbReference type="Rhea" id="RHEA:23540"/>
        <dbReference type="Rhea" id="RHEA-COMP:9663"/>
        <dbReference type="Rhea" id="RHEA-COMP:9680"/>
        <dbReference type="ChEBI" id="CHEBI:29985"/>
        <dbReference type="ChEBI" id="CHEBI:30616"/>
        <dbReference type="ChEBI" id="CHEBI:33019"/>
        <dbReference type="ChEBI" id="CHEBI:78442"/>
        <dbReference type="ChEBI" id="CHEBI:78520"/>
        <dbReference type="ChEBI" id="CHEBI:456215"/>
        <dbReference type="EC" id="6.1.1.17"/>
    </reaction>
</comment>
<comment type="subcellular location">
    <subcellularLocation>
        <location evidence="1">Cytoplasm</location>
    </subcellularLocation>
</comment>
<comment type="similarity">
    <text evidence="2">Belongs to the class-I aminoacyl-tRNA synthetase family. Glutamate--tRNA ligase type 2 subfamily.</text>
</comment>
<evidence type="ECO:0000250" key="1"/>
<evidence type="ECO:0000305" key="2"/>
<accession>C4VBI7</accession>